<evidence type="ECO:0000250" key="1"/>
<evidence type="ECO:0000250" key="2">
    <source>
        <dbReference type="UniProtKB" id="P00749"/>
    </source>
</evidence>
<evidence type="ECO:0000255" key="3"/>
<evidence type="ECO:0000255" key="4">
    <source>
        <dbReference type="PROSITE-ProRule" id="PRU00076"/>
    </source>
</evidence>
<evidence type="ECO:0000255" key="5">
    <source>
        <dbReference type="PROSITE-ProRule" id="PRU00121"/>
    </source>
</evidence>
<evidence type="ECO:0000255" key="6">
    <source>
        <dbReference type="PROSITE-ProRule" id="PRU00274"/>
    </source>
</evidence>
<evidence type="ECO:0000305" key="7"/>
<proteinExistence type="evidence at transcript level"/>
<protein>
    <recommendedName>
        <fullName>Urokinase-type plasminogen activator</fullName>
        <shortName>U-plasminogen activator</shortName>
        <shortName>uPA</shortName>
        <ecNumber>3.4.21.73</ecNumber>
    </recommendedName>
    <component>
        <recommendedName>
            <fullName>Urokinase-type plasminogen activator long chain A</fullName>
        </recommendedName>
    </component>
    <component>
        <recommendedName>
            <fullName>Urokinase-type plasminogen activator short chain A</fullName>
        </recommendedName>
    </component>
    <component>
        <recommendedName>
            <fullName>Urokinase-type plasminogen activator chain B</fullName>
        </recommendedName>
    </component>
</protein>
<name>UROK_PIG</name>
<feature type="signal peptide" evidence="1">
    <location>
        <begin position="1"/>
        <end position="20"/>
    </location>
</feature>
<feature type="chain" id="PRO_0000028330" description="Urokinase-type plasminogen activator">
    <location>
        <begin position="21"/>
        <end position="442"/>
    </location>
</feature>
<feature type="chain" id="PRO_0000028331" description="Urokinase-type plasminogen activator long chain A" evidence="1">
    <location>
        <begin position="21"/>
        <end position="188"/>
    </location>
</feature>
<feature type="chain" id="PRO_0000285900" description="Urokinase-type plasminogen activator short chain A" evidence="1">
    <location>
        <begin position="167"/>
        <end position="188"/>
    </location>
</feature>
<feature type="chain" id="PRO_0000028332" description="Urokinase-type plasminogen activator chain B" evidence="1">
    <location>
        <begin position="190"/>
        <end position="442"/>
    </location>
</feature>
<feature type="domain" description="EGF-like" evidence="4">
    <location>
        <begin position="29"/>
        <end position="65"/>
    </location>
</feature>
<feature type="domain" description="Kringle" evidence="5">
    <location>
        <begin position="72"/>
        <end position="153"/>
    </location>
</feature>
<feature type="domain" description="Peptidase S1" evidence="6">
    <location>
        <begin position="190"/>
        <end position="435"/>
    </location>
</feature>
<feature type="region of interest" description="Binds urokinase plasminogen activator surface receptor" evidence="1">
    <location>
        <begin position="36"/>
        <end position="59"/>
    </location>
</feature>
<feature type="region of interest" description="Connecting peptide">
    <location>
        <begin position="154"/>
        <end position="189"/>
    </location>
</feature>
<feature type="active site" description="Charge relay system">
    <location>
        <position position="235"/>
    </location>
</feature>
<feature type="active site" description="Charge relay system">
    <location>
        <position position="286"/>
    </location>
</feature>
<feature type="active site" description="Charge relay system">
    <location>
        <position position="387"/>
    </location>
</feature>
<feature type="glycosylation site" description="N-linked (GlcNAc...) asparagine" evidence="3">
    <location>
        <position position="152"/>
    </location>
</feature>
<feature type="disulfide bond" evidence="1">
    <location>
        <begin position="33"/>
        <end position="41"/>
    </location>
</feature>
<feature type="disulfide bond" evidence="1">
    <location>
        <begin position="35"/>
        <end position="53"/>
    </location>
</feature>
<feature type="disulfide bond" evidence="1">
    <location>
        <begin position="55"/>
        <end position="64"/>
    </location>
</feature>
<feature type="disulfide bond" evidence="1">
    <location>
        <begin position="72"/>
        <end position="153"/>
    </location>
</feature>
<feature type="disulfide bond" evidence="1">
    <location>
        <begin position="93"/>
        <end position="135"/>
    </location>
</feature>
<feature type="disulfide bond" evidence="1">
    <location>
        <begin position="124"/>
        <end position="148"/>
    </location>
</feature>
<feature type="disulfide bond" description="Interchain (between A and B chains)" evidence="4 5 6">
    <location>
        <begin position="179"/>
        <end position="310"/>
    </location>
</feature>
<feature type="disulfide bond" evidence="1">
    <location>
        <begin position="220"/>
        <end position="236"/>
    </location>
</feature>
<feature type="disulfide bond" evidence="1">
    <location>
        <begin position="228"/>
        <end position="299"/>
    </location>
</feature>
<feature type="disulfide bond" evidence="1">
    <location>
        <begin position="324"/>
        <end position="393"/>
    </location>
</feature>
<feature type="disulfide bond" evidence="1">
    <location>
        <begin position="356"/>
        <end position="372"/>
    </location>
</feature>
<feature type="disulfide bond" evidence="1">
    <location>
        <begin position="383"/>
        <end position="411"/>
    </location>
</feature>
<feature type="sequence conflict" description="In Ref. 1; CAA25806." evidence="7" ref="1">
    <original>Q</original>
    <variation>H</variation>
    <location>
        <position position="241"/>
    </location>
</feature>
<feature type="sequence conflict" description="In Ref. 1; CAA26511." evidence="7" ref="1">
    <original>Q</original>
    <variation>H</variation>
    <location>
        <position position="242"/>
    </location>
</feature>
<feature type="sequence conflict" description="In Ref. 1; CAA25806." evidence="7" ref="1">
    <original>A</original>
    <variation>GS</variation>
    <location>
        <position position="288"/>
    </location>
</feature>
<keyword id="KW-1015">Disulfide bond</keyword>
<keyword id="KW-0245">EGF-like domain</keyword>
<keyword id="KW-0325">Glycoprotein</keyword>
<keyword id="KW-0378">Hydrolase</keyword>
<keyword id="KW-0420">Kringle</keyword>
<keyword id="KW-0617">Plasminogen activation</keyword>
<keyword id="KW-0645">Protease</keyword>
<keyword id="KW-1185">Reference proteome</keyword>
<keyword id="KW-0964">Secreted</keyword>
<keyword id="KW-0720">Serine protease</keyword>
<keyword id="KW-0732">Signal</keyword>
<keyword id="KW-0865">Zymogen</keyword>
<comment type="function">
    <text evidence="2">Specifically cleaves the zymogen plasminogen to form the active enzyme plasmin.</text>
</comment>
<comment type="catalytic activity">
    <reaction>
        <text>Specific cleavage of Arg-|-Val bond in plasminogen to form plasmin.</text>
        <dbReference type="EC" id="3.4.21.73"/>
    </reaction>
</comment>
<comment type="activity regulation">
    <text evidence="2">Inhibited by SERPINA5 (By similarity). Inhibited by SERPINE1 (By similarity).</text>
</comment>
<comment type="subunit">
    <text evidence="2">Found in high and low molecular mass forms. Each consists of two chains, A and B. The high molecular mass form contains a long chain A which is cleaved to yield a short chain A. Forms heterodimer with SERPINA5. Binds LRP1B; binding is followed by internalization and degradation. Interacts with MRC2. Interacts with PLAUR. In complex with SERPINE1, interacts with PLAUR/uPAR. Interacts with SORL1 and LRP1, either alone or in complex with SERPINE1; these interactions are abolished in the presence of LRPAP1/RAP. The ternary complex composed of PLAUR-PLAU-PAI1 also interacts with SORLA.</text>
</comment>
<comment type="subcellular location">
    <subcellularLocation>
        <location evidence="2">Secreted</location>
    </subcellularLocation>
</comment>
<comment type="PTM">
    <text evidence="2">Produced as an inactive single-chain protein (pro-uPA or sc-uPA), is processed into the active disulfide-linked two-chain form of PLAU/uPA by a proteolytic event mediated, at least, by TMPRSS4.</text>
</comment>
<comment type="similarity">
    <text evidence="6">Belongs to the peptidase S1 family.</text>
</comment>
<dbReference type="EC" id="3.4.21.73"/>
<dbReference type="EMBL" id="X01648">
    <property type="protein sequence ID" value="CAA25806.1"/>
    <property type="molecule type" value="Genomic_DNA"/>
</dbReference>
<dbReference type="EMBL" id="X02724">
    <property type="protein sequence ID" value="CAA26511.1"/>
    <property type="molecule type" value="mRNA"/>
</dbReference>
<dbReference type="PIR" id="A00932">
    <property type="entry name" value="UKPG"/>
</dbReference>
<dbReference type="RefSeq" id="NP_999110.1">
    <property type="nucleotide sequence ID" value="NM_213945.1"/>
</dbReference>
<dbReference type="SMR" id="P04185"/>
<dbReference type="FunCoup" id="P04185">
    <property type="interactions" value="58"/>
</dbReference>
<dbReference type="STRING" id="9823.ENSSSCP00000010995"/>
<dbReference type="ChEMBL" id="CHEMBL1075030"/>
<dbReference type="MEROPS" id="S01.231"/>
<dbReference type="GlyCosmos" id="P04185">
    <property type="glycosylation" value="1 site, No reported glycans"/>
</dbReference>
<dbReference type="GlyGen" id="P04185">
    <property type="glycosylation" value="1 site"/>
</dbReference>
<dbReference type="PaxDb" id="9823-ENSSSCP00000010995"/>
<dbReference type="GeneID" id="396985"/>
<dbReference type="KEGG" id="ssc:396985"/>
<dbReference type="CTD" id="5328"/>
<dbReference type="eggNOG" id="ENOG502QRMI">
    <property type="taxonomic scope" value="Eukaryota"/>
</dbReference>
<dbReference type="InParanoid" id="P04185"/>
<dbReference type="OrthoDB" id="9406323at2759"/>
<dbReference type="PRO" id="PR:P04185"/>
<dbReference type="Proteomes" id="UP000008227">
    <property type="component" value="Unplaced"/>
</dbReference>
<dbReference type="Proteomes" id="UP000314985">
    <property type="component" value="Unplaced"/>
</dbReference>
<dbReference type="Proteomes" id="UP000694570">
    <property type="component" value="Unplaced"/>
</dbReference>
<dbReference type="Proteomes" id="UP000694571">
    <property type="component" value="Unplaced"/>
</dbReference>
<dbReference type="Proteomes" id="UP000694720">
    <property type="component" value="Unplaced"/>
</dbReference>
<dbReference type="Proteomes" id="UP000694722">
    <property type="component" value="Unplaced"/>
</dbReference>
<dbReference type="Proteomes" id="UP000694723">
    <property type="component" value="Unplaced"/>
</dbReference>
<dbReference type="Proteomes" id="UP000694724">
    <property type="component" value="Unplaced"/>
</dbReference>
<dbReference type="Proteomes" id="UP000694725">
    <property type="component" value="Unplaced"/>
</dbReference>
<dbReference type="Proteomes" id="UP000694726">
    <property type="component" value="Unplaced"/>
</dbReference>
<dbReference type="Proteomes" id="UP000694727">
    <property type="component" value="Unplaced"/>
</dbReference>
<dbReference type="Proteomes" id="UP000694728">
    <property type="component" value="Unplaced"/>
</dbReference>
<dbReference type="GO" id="GO:0005615">
    <property type="term" value="C:extracellular space"/>
    <property type="evidence" value="ECO:0000250"/>
    <property type="project" value="UniProtKB"/>
</dbReference>
<dbReference type="GO" id="GO:0004252">
    <property type="term" value="F:serine-type endopeptidase activity"/>
    <property type="evidence" value="ECO:0000318"/>
    <property type="project" value="GO_Central"/>
</dbReference>
<dbReference type="GO" id="GO:0042730">
    <property type="term" value="P:fibrinolysis"/>
    <property type="evidence" value="ECO:0000318"/>
    <property type="project" value="GO_Central"/>
</dbReference>
<dbReference type="GO" id="GO:0006508">
    <property type="term" value="P:proteolysis"/>
    <property type="evidence" value="ECO:0007669"/>
    <property type="project" value="UniProtKB-KW"/>
</dbReference>
<dbReference type="GO" id="GO:0033628">
    <property type="term" value="P:regulation of cell adhesion mediated by integrin"/>
    <property type="evidence" value="ECO:0000318"/>
    <property type="project" value="GO_Central"/>
</dbReference>
<dbReference type="CDD" id="cd00108">
    <property type="entry name" value="KR"/>
    <property type="match status" value="1"/>
</dbReference>
<dbReference type="CDD" id="cd00190">
    <property type="entry name" value="Tryp_SPc"/>
    <property type="match status" value="1"/>
</dbReference>
<dbReference type="FunFam" id="2.40.10.10:FF:000068">
    <property type="entry name" value="transmembrane protease serine 2"/>
    <property type="match status" value="1"/>
</dbReference>
<dbReference type="FunFam" id="2.10.25.10:FF:000266">
    <property type="entry name" value="Urokinase-type plasminogen activator"/>
    <property type="match status" value="1"/>
</dbReference>
<dbReference type="FunFam" id="2.40.10.10:FF:000065">
    <property type="entry name" value="Urokinase-type plasminogen activator"/>
    <property type="match status" value="1"/>
</dbReference>
<dbReference type="FunFam" id="2.40.20.10:FF:000001">
    <property type="entry name" value="Urokinase-type plasminogen activator"/>
    <property type="match status" value="1"/>
</dbReference>
<dbReference type="Gene3D" id="2.10.25.10">
    <property type="entry name" value="Laminin"/>
    <property type="match status" value="1"/>
</dbReference>
<dbReference type="Gene3D" id="2.40.20.10">
    <property type="entry name" value="Plasminogen Kringle 4"/>
    <property type="match status" value="1"/>
</dbReference>
<dbReference type="Gene3D" id="2.40.10.10">
    <property type="entry name" value="Trypsin-like serine proteases"/>
    <property type="match status" value="2"/>
</dbReference>
<dbReference type="InterPro" id="IPR000742">
    <property type="entry name" value="EGF-like_dom"/>
</dbReference>
<dbReference type="InterPro" id="IPR000001">
    <property type="entry name" value="Kringle"/>
</dbReference>
<dbReference type="InterPro" id="IPR013806">
    <property type="entry name" value="Kringle-like"/>
</dbReference>
<dbReference type="InterPro" id="IPR018056">
    <property type="entry name" value="Kringle_CS"/>
</dbReference>
<dbReference type="InterPro" id="IPR038178">
    <property type="entry name" value="Kringle_sf"/>
</dbReference>
<dbReference type="InterPro" id="IPR009003">
    <property type="entry name" value="Peptidase_S1_PA"/>
</dbReference>
<dbReference type="InterPro" id="IPR043504">
    <property type="entry name" value="Peptidase_S1_PA_chymotrypsin"/>
</dbReference>
<dbReference type="InterPro" id="IPR001314">
    <property type="entry name" value="Peptidase_S1A"/>
</dbReference>
<dbReference type="InterPro" id="IPR050127">
    <property type="entry name" value="Serine_Proteases_S1"/>
</dbReference>
<dbReference type="InterPro" id="IPR001254">
    <property type="entry name" value="Trypsin_dom"/>
</dbReference>
<dbReference type="InterPro" id="IPR018114">
    <property type="entry name" value="TRYPSIN_HIS"/>
</dbReference>
<dbReference type="InterPro" id="IPR033116">
    <property type="entry name" value="TRYPSIN_SER"/>
</dbReference>
<dbReference type="PANTHER" id="PTHR24264">
    <property type="entry name" value="TRYPSIN-RELATED"/>
    <property type="match status" value="1"/>
</dbReference>
<dbReference type="PANTHER" id="PTHR24264:SF38">
    <property type="entry name" value="UROKINASE-TYPE PLASMINOGEN ACTIVATOR"/>
    <property type="match status" value="1"/>
</dbReference>
<dbReference type="Pfam" id="PF00051">
    <property type="entry name" value="Kringle"/>
    <property type="match status" value="1"/>
</dbReference>
<dbReference type="Pfam" id="PF00089">
    <property type="entry name" value="Trypsin"/>
    <property type="match status" value="1"/>
</dbReference>
<dbReference type="PRINTS" id="PR00722">
    <property type="entry name" value="CHYMOTRYPSIN"/>
</dbReference>
<dbReference type="PRINTS" id="PR00018">
    <property type="entry name" value="KRINGLE"/>
</dbReference>
<dbReference type="SMART" id="SM00130">
    <property type="entry name" value="KR"/>
    <property type="match status" value="1"/>
</dbReference>
<dbReference type="SMART" id="SM00020">
    <property type="entry name" value="Tryp_SPc"/>
    <property type="match status" value="1"/>
</dbReference>
<dbReference type="SUPFAM" id="SSF57440">
    <property type="entry name" value="Kringle-like"/>
    <property type="match status" value="1"/>
</dbReference>
<dbReference type="SUPFAM" id="SSF50494">
    <property type="entry name" value="Trypsin-like serine proteases"/>
    <property type="match status" value="1"/>
</dbReference>
<dbReference type="PROSITE" id="PS00022">
    <property type="entry name" value="EGF_1"/>
    <property type="match status" value="1"/>
</dbReference>
<dbReference type="PROSITE" id="PS50026">
    <property type="entry name" value="EGF_3"/>
    <property type="match status" value="1"/>
</dbReference>
<dbReference type="PROSITE" id="PS00021">
    <property type="entry name" value="KRINGLE_1"/>
    <property type="match status" value="1"/>
</dbReference>
<dbReference type="PROSITE" id="PS50070">
    <property type="entry name" value="KRINGLE_2"/>
    <property type="match status" value="1"/>
</dbReference>
<dbReference type="PROSITE" id="PS50240">
    <property type="entry name" value="TRYPSIN_DOM"/>
    <property type="match status" value="1"/>
</dbReference>
<dbReference type="PROSITE" id="PS00134">
    <property type="entry name" value="TRYPSIN_HIS"/>
    <property type="match status" value="1"/>
</dbReference>
<dbReference type="PROSITE" id="PS00135">
    <property type="entry name" value="TRYPSIN_SER"/>
    <property type="match status" value="1"/>
</dbReference>
<sequence>MRVLRACLSLCVLVVSDSKGSHELHQESGASNCGCLNGGKCVSYKYFSNIQRCSCPKKFQGEHCEIDTSQTCFEGNGHSYRGKANTNTGGRPCLPWNSATVLLNTYHAHRPDALQLGLGKHNYCRNPDNQRRPWCYVQVGLKQLVQECMVPNCSGGESHRPAYDGKNPFSTPEKVEFQCGQKALRPRFKIVGGKSTTIENQPWFAAIYRRHRGGSVTYVCGGSLISPCWVVSATHCFINYQQKEDYIVYLGRQTLHSSTHGEMKFEVEKLILHEDYSADSLAHHNDIALLKIRTDKGQCAQPSRSIQTICLPPVNGDAHFGASCEIVGFGKEDPSDYLYPEQLKMTVVKLVSHRECQQPHYYGSEVTTKMLCAADPQWKTDSCQGDSGGPLVCSTQGRLTLTGIVSWGRECAMKDKPGVYTRVSRFLTWIHTHVGGENGLAH</sequence>
<accession>P04185</accession>
<organism>
    <name type="scientific">Sus scrofa</name>
    <name type="common">Pig</name>
    <dbReference type="NCBI Taxonomy" id="9823"/>
    <lineage>
        <taxon>Eukaryota</taxon>
        <taxon>Metazoa</taxon>
        <taxon>Chordata</taxon>
        <taxon>Craniata</taxon>
        <taxon>Vertebrata</taxon>
        <taxon>Euteleostomi</taxon>
        <taxon>Mammalia</taxon>
        <taxon>Eutheria</taxon>
        <taxon>Laurasiatheria</taxon>
        <taxon>Artiodactyla</taxon>
        <taxon>Suina</taxon>
        <taxon>Suidae</taxon>
        <taxon>Sus</taxon>
    </lineage>
</organism>
<gene>
    <name type="primary">PLAU</name>
</gene>
<reference key="1">
    <citation type="journal article" date="1984" name="Nucleic Acids Res.">
        <title>cDNA and gene nucleotide sequence of porcine plasminogen activator.</title>
        <authorList>
            <person name="Nagamine Y."/>
            <person name="Pearson D."/>
            <person name="Altus M.S."/>
            <person name="Reich E."/>
        </authorList>
    </citation>
    <scope>NUCLEOTIDE SEQUENCE [GENOMIC DNA / MRNA]</scope>
    <source>
        <tissue>Kidney</tissue>
    </source>
</reference>
<reference key="2">
    <citation type="submission" date="1986-12" db="PIR data bank">
        <authorList>
            <person name="Nagamine Y."/>
        </authorList>
    </citation>
    <scope>SEQUENCE REVISION TO 241</scope>
</reference>